<gene>
    <name type="primary">Plscr1</name>
</gene>
<comment type="function">
    <text evidence="1 2">Catalyzes calcium-induced ATP-independent rapid bidirectional and non-specific distribution of phospholipids (lipid scrambling or lipid flip-flop) between the inner and outer leaflet of the plasma membrane resulting in collapse of the phospholipid asymmetry which leads to phosphatidylserine externalization on the cell surface (By similarity). Mediates calcium-dependent phosphatidylserine externalization and apoptosis in neurons via its association with TRPC5 (By similarity). Also exhibits magnesium-dependent nuclease activity against double-stranded DNA and RNA but not single-stranded DNA and can enhance DNA decatenation mediated by TOP2A (By similarity). Negatively regulates FcR-mediated phagocytosis in differentiated macrophages (By similarity). May contribute to cytokine-regulated cell proliferation and differentiation (By similarity).</text>
</comment>
<comment type="catalytic activity">
    <reaction evidence="1">
        <text>a 1,2-diacyl-sn-glycero-3-phosphocholine(in) = a 1,2-diacyl-sn-glycero-3-phosphocholine(out)</text>
        <dbReference type="Rhea" id="RHEA:38571"/>
        <dbReference type="ChEBI" id="CHEBI:57643"/>
    </reaction>
    <physiologicalReaction direction="left-to-right" evidence="1">
        <dbReference type="Rhea" id="RHEA:38572"/>
    </physiologicalReaction>
    <physiologicalReaction direction="right-to-left" evidence="1">
        <dbReference type="Rhea" id="RHEA:38573"/>
    </physiologicalReaction>
</comment>
<comment type="catalytic activity">
    <reaction evidence="1">
        <text>a 1,2-diacyl-sn-glycero-3-phosphoethanolamine(in) = a 1,2-diacyl-sn-glycero-3-phosphoethanolamine(out)</text>
        <dbReference type="Rhea" id="RHEA:38895"/>
        <dbReference type="ChEBI" id="CHEBI:64612"/>
    </reaction>
    <physiologicalReaction direction="left-to-right" evidence="1">
        <dbReference type="Rhea" id="RHEA:38896"/>
    </physiologicalReaction>
</comment>
<comment type="catalytic activity">
    <reaction evidence="1">
        <text>a 1,2-diacyl-sn-glycero-3-phospho-L-serine(in) = a 1,2-diacyl-sn-glycero-3-phospho-L-serine(out)</text>
        <dbReference type="Rhea" id="RHEA:38663"/>
        <dbReference type="ChEBI" id="CHEBI:57262"/>
    </reaction>
    <physiologicalReaction direction="left-to-right" evidence="1">
        <dbReference type="Rhea" id="RHEA:38664"/>
    </physiologicalReaction>
    <physiologicalReaction direction="right-to-left" evidence="1">
        <dbReference type="Rhea" id="RHEA:38665"/>
    </physiologicalReaction>
</comment>
<comment type="cofactor">
    <cofactor evidence="1">
        <name>Ca(2+)</name>
        <dbReference type="ChEBI" id="CHEBI:29108"/>
    </cofactor>
</comment>
<comment type="cofactor">
    <cofactor evidence="1">
        <name>Mg(2+)</name>
        <dbReference type="ChEBI" id="CHEBI:18420"/>
    </cofactor>
    <cofactor evidence="1">
        <name>Zn(2+)</name>
        <dbReference type="ChEBI" id="CHEBI:29105"/>
    </cofactor>
    <text evidence="1">Magnesium. Can also use zinc with lower efficiency.</text>
</comment>
<comment type="subunit">
    <text evidence="1 2">Forms homooligomers in the presence of calcium (By similarity). Interacts with ABL (By similarity). Interacts with RELT, RELL1 and RELL2 (By similarity). Interacts with OXSR1 in the presence of RELT (By similarity). Interacts with OCLN, TOP2A and TOP2B (By similarity). Interacts with TRPC1, TRPC4 and TRPC5 (By similarity). Interacts with ILDR1 (By similarity).</text>
</comment>
<comment type="subcellular location">
    <subcellularLocation>
        <location evidence="1">Cell membrane</location>
        <topology evidence="1">Single-pass type II membrane protein</topology>
    </subcellularLocation>
    <subcellularLocation>
        <location evidence="1">Cell membrane</location>
        <topology evidence="1">Lipid-anchor</topology>
        <orientation>Cytoplasmic side</orientation>
    </subcellularLocation>
    <subcellularLocation>
        <location evidence="1">Nucleus</location>
    </subcellularLocation>
    <subcellularLocation>
        <location evidence="1">Cytoplasm</location>
    </subcellularLocation>
    <subcellularLocation>
        <location evidence="1">Cytoplasm</location>
        <location evidence="1">Perinuclear region</location>
    </subcellularLocation>
    <text evidence="1">Localizes to the perinuclear region in the presence of RELT. Palmitoylation regulates its localization to the cell membrane or the nucleus; trafficking to the cell membrane is dependent upon palmitoylation whereas in the absence of palmitoylation, localizes to the nucleus.</text>
</comment>
<comment type="domain">
    <text evidence="1">The N-terminal proline-rich domain (PRD) is required for phospholipid scramblase activity.</text>
</comment>
<comment type="domain">
    <text evidence="1">The transmembrane domain is essential for membrane insertion, phospholipid scramblase activity and proper calcium-binding.</text>
</comment>
<comment type="PTM">
    <text evidence="1 5">Phosphorylated on tyrosine residues (PubMed:11259432). Phosphorylated by OXSR1 in the presence of RELT (By similarity). Phosphorylation at Thr-178 by PKC/PKCD increases its phospholipid scramblase activity during both cell stimulation and apoptosis (By similarity).</text>
</comment>
<comment type="PTM">
    <text evidence="1">Palmitoylation is required for its phospholipid scramblase activity (By similarity). Palmitoylation regulates its localization to the cell membrane or the nucleus; trafficking to the cell membrane is dependent upon palmitoylation whereas in the absence of palmitoylation, localizes to the nucleus (By similarity).</text>
</comment>
<comment type="similarity">
    <text evidence="6">Belongs to the phospholipid scramblase family.</text>
</comment>
<dbReference type="EC" id="3.1.-.-" evidence="1"/>
<dbReference type="EMBL" id="AY024347">
    <property type="protein sequence ID" value="AAK00575.1"/>
    <property type="molecule type" value="mRNA"/>
</dbReference>
<dbReference type="RefSeq" id="NP_476542.1">
    <property type="nucleotide sequence ID" value="NM_057194.2"/>
</dbReference>
<dbReference type="RefSeq" id="XP_006243600.1">
    <property type="nucleotide sequence ID" value="XM_006243538.5"/>
</dbReference>
<dbReference type="FunCoup" id="P58195">
    <property type="interactions" value="1212"/>
</dbReference>
<dbReference type="STRING" id="10116.ENSRNOP00000053569"/>
<dbReference type="GlyGen" id="P58195">
    <property type="glycosylation" value="1 site"/>
</dbReference>
<dbReference type="PhosphoSitePlus" id="P58195"/>
<dbReference type="SwissPalm" id="P58195"/>
<dbReference type="PaxDb" id="10116-ENSRNOP00000053569"/>
<dbReference type="GeneID" id="117540"/>
<dbReference type="KEGG" id="rno:117540"/>
<dbReference type="UCSC" id="RGD:620521">
    <property type="organism name" value="rat"/>
</dbReference>
<dbReference type="AGR" id="RGD:620521"/>
<dbReference type="CTD" id="5359"/>
<dbReference type="RGD" id="620521">
    <property type="gene designation" value="Plscr1"/>
</dbReference>
<dbReference type="VEuPathDB" id="HostDB:ENSRNOG00000008048"/>
<dbReference type="eggNOG" id="KOG0621">
    <property type="taxonomic scope" value="Eukaryota"/>
</dbReference>
<dbReference type="HOGENOM" id="CLU_053024_2_0_1"/>
<dbReference type="InParanoid" id="P58195"/>
<dbReference type="PRO" id="PR:P58195"/>
<dbReference type="Proteomes" id="UP000002494">
    <property type="component" value="Chromosome 8"/>
</dbReference>
<dbReference type="Bgee" id="ENSRNOG00000008048">
    <property type="expression patterns" value="Expressed in adult mammalian kidney and 18 other cell types or tissues"/>
</dbReference>
<dbReference type="ExpressionAtlas" id="P58195">
    <property type="expression patterns" value="baseline and differential"/>
</dbReference>
<dbReference type="GO" id="GO:0062023">
    <property type="term" value="C:collagen-containing extracellular matrix"/>
    <property type="evidence" value="ECO:0000250"/>
    <property type="project" value="UniProtKB"/>
</dbReference>
<dbReference type="GO" id="GO:0005737">
    <property type="term" value="C:cytoplasm"/>
    <property type="evidence" value="ECO:0000266"/>
    <property type="project" value="RGD"/>
</dbReference>
<dbReference type="GO" id="GO:0005829">
    <property type="term" value="C:cytosol"/>
    <property type="evidence" value="ECO:0000250"/>
    <property type="project" value="UniProtKB"/>
</dbReference>
<dbReference type="GO" id="GO:0005794">
    <property type="term" value="C:Golgi apparatus"/>
    <property type="evidence" value="ECO:0000250"/>
    <property type="project" value="UniProtKB"/>
</dbReference>
<dbReference type="GO" id="GO:0045121">
    <property type="term" value="C:membrane raft"/>
    <property type="evidence" value="ECO:0000314"/>
    <property type="project" value="UniProtKB"/>
</dbReference>
<dbReference type="GO" id="GO:0005730">
    <property type="term" value="C:nucleolus"/>
    <property type="evidence" value="ECO:0000250"/>
    <property type="project" value="UniProtKB"/>
</dbReference>
<dbReference type="GO" id="GO:0005634">
    <property type="term" value="C:nucleus"/>
    <property type="evidence" value="ECO:0000250"/>
    <property type="project" value="UniProtKB"/>
</dbReference>
<dbReference type="GO" id="GO:0048471">
    <property type="term" value="C:perinuclear region of cytoplasm"/>
    <property type="evidence" value="ECO:0000250"/>
    <property type="project" value="UniProtKB"/>
</dbReference>
<dbReference type="GO" id="GO:0005886">
    <property type="term" value="C:plasma membrane"/>
    <property type="evidence" value="ECO:0000314"/>
    <property type="project" value="UniProtKB"/>
</dbReference>
<dbReference type="GO" id="GO:0005509">
    <property type="term" value="F:calcium ion binding"/>
    <property type="evidence" value="ECO:0000250"/>
    <property type="project" value="UniProtKB"/>
</dbReference>
<dbReference type="GO" id="GO:0042609">
    <property type="term" value="F:CD4 receptor binding"/>
    <property type="evidence" value="ECO:0000250"/>
    <property type="project" value="UniProtKB"/>
</dbReference>
<dbReference type="GO" id="GO:0003677">
    <property type="term" value="F:DNA binding"/>
    <property type="evidence" value="ECO:0007669"/>
    <property type="project" value="UniProtKB-KW"/>
</dbReference>
<dbReference type="GO" id="GO:0001228">
    <property type="term" value="F:DNA-binding transcription activator activity, RNA polymerase II-specific"/>
    <property type="evidence" value="ECO:0000250"/>
    <property type="project" value="UniProtKB"/>
</dbReference>
<dbReference type="GO" id="GO:0019899">
    <property type="term" value="F:enzyme binding"/>
    <property type="evidence" value="ECO:0000353"/>
    <property type="project" value="UniProtKB"/>
</dbReference>
<dbReference type="GO" id="GO:0005154">
    <property type="term" value="F:epidermal growth factor receptor binding"/>
    <property type="evidence" value="ECO:0000250"/>
    <property type="project" value="UniProtKB"/>
</dbReference>
<dbReference type="GO" id="GO:0032791">
    <property type="term" value="F:lead ion binding"/>
    <property type="evidence" value="ECO:0000250"/>
    <property type="project" value="UniProtKB"/>
</dbReference>
<dbReference type="GO" id="GO:0000287">
    <property type="term" value="F:magnesium ion binding"/>
    <property type="evidence" value="ECO:0000250"/>
    <property type="project" value="UniProtKB"/>
</dbReference>
<dbReference type="GO" id="GO:0045340">
    <property type="term" value="F:mercury ion binding"/>
    <property type="evidence" value="ECO:0000250"/>
    <property type="project" value="UniProtKB"/>
</dbReference>
<dbReference type="GO" id="GO:0004518">
    <property type="term" value="F:nuclease activity"/>
    <property type="evidence" value="ECO:0000250"/>
    <property type="project" value="UniProtKB"/>
</dbReference>
<dbReference type="GO" id="GO:0017128">
    <property type="term" value="F:phospholipid scramblase activity"/>
    <property type="evidence" value="ECO:0000250"/>
    <property type="project" value="UniProtKB"/>
</dbReference>
<dbReference type="GO" id="GO:0017124">
    <property type="term" value="F:SH3 domain binding"/>
    <property type="evidence" value="ECO:0000250"/>
    <property type="project" value="UniProtKB"/>
</dbReference>
<dbReference type="GO" id="GO:0001618">
    <property type="term" value="F:virus receptor activity"/>
    <property type="evidence" value="ECO:0000266"/>
    <property type="project" value="RGD"/>
</dbReference>
<dbReference type="GO" id="GO:0008270">
    <property type="term" value="F:zinc ion binding"/>
    <property type="evidence" value="ECO:0000250"/>
    <property type="project" value="UniProtKB"/>
</dbReference>
<dbReference type="GO" id="GO:0006953">
    <property type="term" value="P:acute-phase response"/>
    <property type="evidence" value="ECO:0000266"/>
    <property type="project" value="RGD"/>
</dbReference>
<dbReference type="GO" id="GO:0006915">
    <property type="term" value="P:apoptotic process"/>
    <property type="evidence" value="ECO:0000250"/>
    <property type="project" value="UniProtKB"/>
</dbReference>
<dbReference type="GO" id="GO:0071345">
    <property type="term" value="P:cellular response to cytokine stimulus"/>
    <property type="evidence" value="ECO:0000266"/>
    <property type="project" value="RGD"/>
</dbReference>
<dbReference type="GO" id="GO:0071222">
    <property type="term" value="P:cellular response to lipopolysaccharide"/>
    <property type="evidence" value="ECO:0000266"/>
    <property type="project" value="RGD"/>
</dbReference>
<dbReference type="GO" id="GO:0051607">
    <property type="term" value="P:defense response to virus"/>
    <property type="evidence" value="ECO:0000250"/>
    <property type="project" value="UniProtKB"/>
</dbReference>
<dbReference type="GO" id="GO:0006955">
    <property type="term" value="P:immune response"/>
    <property type="evidence" value="ECO:0000315"/>
    <property type="project" value="RGD"/>
</dbReference>
<dbReference type="GO" id="GO:0097193">
    <property type="term" value="P:intrinsic apoptotic signaling pathway"/>
    <property type="evidence" value="ECO:0000266"/>
    <property type="project" value="RGD"/>
</dbReference>
<dbReference type="GO" id="GO:0030099">
    <property type="term" value="P:myeloid cell differentiation"/>
    <property type="evidence" value="ECO:0000266"/>
    <property type="project" value="RGD"/>
</dbReference>
<dbReference type="GO" id="GO:0050765">
    <property type="term" value="P:negative regulation of phagocytosis"/>
    <property type="evidence" value="ECO:0000250"/>
    <property type="project" value="UniProtKB"/>
</dbReference>
<dbReference type="GO" id="GO:0045071">
    <property type="term" value="P:negative regulation of viral genome replication"/>
    <property type="evidence" value="ECO:0000250"/>
    <property type="project" value="UniProtKB"/>
</dbReference>
<dbReference type="GO" id="GO:0006659">
    <property type="term" value="P:phosphatidylserine biosynthetic process"/>
    <property type="evidence" value="ECO:0000266"/>
    <property type="project" value="RGD"/>
</dbReference>
<dbReference type="GO" id="GO:0070782">
    <property type="term" value="P:phosphatidylserine exposure on apoptotic cell surface"/>
    <property type="evidence" value="ECO:0000250"/>
    <property type="project" value="UniProtKB"/>
</dbReference>
<dbReference type="GO" id="GO:0015914">
    <property type="term" value="P:phospholipid transport"/>
    <property type="evidence" value="ECO:0000304"/>
    <property type="project" value="RGD"/>
</dbReference>
<dbReference type="GO" id="GO:0017121">
    <property type="term" value="P:plasma membrane phospholipid scrambling"/>
    <property type="evidence" value="ECO:0000315"/>
    <property type="project" value="UniProtKB"/>
</dbReference>
<dbReference type="GO" id="GO:0043065">
    <property type="term" value="P:positive regulation of apoptotic process"/>
    <property type="evidence" value="ECO:0000266"/>
    <property type="project" value="RGD"/>
</dbReference>
<dbReference type="GO" id="GO:1905820">
    <property type="term" value="P:positive regulation of chromosome separation"/>
    <property type="evidence" value="ECO:0000250"/>
    <property type="project" value="UniProtKB"/>
</dbReference>
<dbReference type="GO" id="GO:2000373">
    <property type="term" value="P:positive regulation of DNA topoisomerase (ATP-hydrolyzing) activity"/>
    <property type="evidence" value="ECO:0000250"/>
    <property type="project" value="UniProtKB"/>
</dbReference>
<dbReference type="GO" id="GO:0010628">
    <property type="term" value="P:positive regulation of gene expression"/>
    <property type="evidence" value="ECO:0000266"/>
    <property type="project" value="RGD"/>
</dbReference>
<dbReference type="GO" id="GO:0045089">
    <property type="term" value="P:positive regulation of innate immune response"/>
    <property type="evidence" value="ECO:0000250"/>
    <property type="project" value="UniProtKB"/>
</dbReference>
<dbReference type="GO" id="GO:1902231">
    <property type="term" value="P:positive regulation of intrinsic apoptotic signaling pathway in response to DNA damage"/>
    <property type="evidence" value="ECO:0000266"/>
    <property type="project" value="RGD"/>
</dbReference>
<dbReference type="GO" id="GO:0045944">
    <property type="term" value="P:positive regulation of transcription by RNA polymerase II"/>
    <property type="evidence" value="ECO:0000250"/>
    <property type="project" value="UniProtKB"/>
</dbReference>
<dbReference type="GO" id="GO:0060368">
    <property type="term" value="P:regulation of Fc receptor mediated stimulatory signaling pathway"/>
    <property type="evidence" value="ECO:0000315"/>
    <property type="project" value="UniProtKB"/>
</dbReference>
<dbReference type="GO" id="GO:0033003">
    <property type="term" value="P:regulation of mast cell activation"/>
    <property type="evidence" value="ECO:0000315"/>
    <property type="project" value="UniProtKB"/>
</dbReference>
<dbReference type="GO" id="GO:0035455">
    <property type="term" value="P:response to interferon-alpha"/>
    <property type="evidence" value="ECO:0000266"/>
    <property type="project" value="RGD"/>
</dbReference>
<dbReference type="GO" id="GO:0035456">
    <property type="term" value="P:response to interferon-beta"/>
    <property type="evidence" value="ECO:0000266"/>
    <property type="project" value="RGD"/>
</dbReference>
<dbReference type="GO" id="GO:0010288">
    <property type="term" value="P:response to lead ion"/>
    <property type="evidence" value="ECO:0000266"/>
    <property type="project" value="RGD"/>
</dbReference>
<dbReference type="InterPro" id="IPR005552">
    <property type="entry name" value="Scramblase"/>
</dbReference>
<dbReference type="PANTHER" id="PTHR23248:SF38">
    <property type="entry name" value="PHOSPHOLIPID SCRAMBLASE 1"/>
    <property type="match status" value="1"/>
</dbReference>
<dbReference type="PANTHER" id="PTHR23248">
    <property type="entry name" value="PHOSPHOLIPID SCRAMBLASE-RELATED"/>
    <property type="match status" value="1"/>
</dbReference>
<dbReference type="Pfam" id="PF03803">
    <property type="entry name" value="Scramblase"/>
    <property type="match status" value="1"/>
</dbReference>
<name>PLS1_RAT</name>
<protein>
    <recommendedName>
        <fullName>Phospholipid scramblase 1</fullName>
        <shortName>PL scramblase 1</shortName>
    </recommendedName>
    <alternativeName>
        <fullName>Ca(2+)-dependent phospholipid scramblase 1</fullName>
    </alternativeName>
    <alternativeName>
        <fullName evidence="1">Mg(2+)-dependent nuclease</fullName>
        <ecNumber evidence="1">3.1.-.-</ecNumber>
    </alternativeName>
</protein>
<organism>
    <name type="scientific">Rattus norvegicus</name>
    <name type="common">Rat</name>
    <dbReference type="NCBI Taxonomy" id="10116"/>
    <lineage>
        <taxon>Eukaryota</taxon>
        <taxon>Metazoa</taxon>
        <taxon>Chordata</taxon>
        <taxon>Craniata</taxon>
        <taxon>Vertebrata</taxon>
        <taxon>Euteleostomi</taxon>
        <taxon>Mammalia</taxon>
        <taxon>Eutheria</taxon>
        <taxon>Euarchontoglires</taxon>
        <taxon>Glires</taxon>
        <taxon>Rodentia</taxon>
        <taxon>Myomorpha</taxon>
        <taxon>Muroidea</taxon>
        <taxon>Muridae</taxon>
        <taxon>Murinae</taxon>
        <taxon>Rattus</taxon>
    </lineage>
</organism>
<sequence length="335" mass="36711">MEKHGPPEHAAYPIPQADYQGSQGPYPGPQGPYPGPQGPYAGPQGPYPGPQGPYAGPQGPYPGPQPGYPVPPGSYAGGDPSGFPVQHQPAYNHPGGPGGTPWMQAPPPPLDCPPGLEYLTQIDQILVHQQIELLEVLTGFETNNKYEIKNSLGQRVYFAVEDTDCCTRNCCGASRPFTLRILDNMGREVMTLERPLRCSSCCFPCCLQEIEIQAPPGVPVGYVIQTWHPCLPKFTLQNEKRQDVLKVVGPCVVCSCCSDIDFELKSLDEESVVGKISKQWSGFVREAFTDADNFGIQFPLDLDVKMKAVMLGACFLIDFMFFERTGNEEQRSGVW</sequence>
<reference key="1">
    <citation type="journal article" date="2001" name="J. Biol. Chem.">
        <title>IgE receptor type I-dependent tyrosine phosphorylation of phospholipid scramblase.</title>
        <authorList>
            <person name="Pastorelli C."/>
            <person name="Veiga J."/>
            <person name="Charles N."/>
            <person name="Voignier E."/>
            <person name="Moussu H."/>
            <person name="Monteiro R.C."/>
            <person name="Benhamou M."/>
        </authorList>
    </citation>
    <scope>NUCLEOTIDE SEQUENCE [MRNA]</scope>
    <scope>PHOSPHORYLATION</scope>
</reference>
<evidence type="ECO:0000250" key="1">
    <source>
        <dbReference type="UniProtKB" id="O15162"/>
    </source>
</evidence>
<evidence type="ECO:0000250" key="2">
    <source>
        <dbReference type="UniProtKB" id="Q9JJ00"/>
    </source>
</evidence>
<evidence type="ECO:0000255" key="3"/>
<evidence type="ECO:0000256" key="4">
    <source>
        <dbReference type="SAM" id="MobiDB-lite"/>
    </source>
</evidence>
<evidence type="ECO:0000269" key="5">
    <source>
    </source>
</evidence>
<evidence type="ECO:0000305" key="6"/>
<feature type="chain" id="PRO_0000100786" description="Phospholipid scramblase 1">
    <location>
        <begin position="1"/>
        <end position="335"/>
    </location>
</feature>
<feature type="topological domain" description="Cytoplasmic" evidence="1">
    <location>
        <begin position="1"/>
        <end position="305"/>
    </location>
</feature>
<feature type="transmembrane region" description="Helical" evidence="3">
    <location>
        <begin position="306"/>
        <end position="322"/>
    </location>
</feature>
<feature type="topological domain" description="Extracellular" evidence="1">
    <location>
        <begin position="323"/>
        <end position="335"/>
    </location>
</feature>
<feature type="repeat" description="1">
    <location>
        <begin position="23"/>
        <end position="29"/>
    </location>
</feature>
<feature type="repeat" description="2">
    <location>
        <begin position="30"/>
        <end position="36"/>
    </location>
</feature>
<feature type="repeat" description="3">
    <location>
        <begin position="37"/>
        <end position="43"/>
    </location>
</feature>
<feature type="repeat" description="4">
    <location>
        <begin position="44"/>
        <end position="50"/>
    </location>
</feature>
<feature type="repeat" description="5">
    <location>
        <begin position="51"/>
        <end position="57"/>
    </location>
</feature>
<feature type="repeat" description="6">
    <location>
        <begin position="58"/>
        <end position="64"/>
    </location>
</feature>
<feature type="repeat" description="7; approximate">
    <location>
        <begin position="65"/>
        <end position="71"/>
    </location>
</feature>
<feature type="region of interest" description="Disordered" evidence="4">
    <location>
        <begin position="1"/>
        <end position="102"/>
    </location>
</feature>
<feature type="region of interest" description="Proline-rich domain (PRD)" evidence="1">
    <location>
        <begin position="1"/>
        <end position="101"/>
    </location>
</feature>
<feature type="region of interest" description="7 X 7 AA tandem repeats of Q-G-P-Y-[AP]-G-P">
    <location>
        <begin position="23"/>
        <end position="71"/>
    </location>
</feature>
<feature type="short sequence motif" description="SH3-binding 1" evidence="3">
    <location>
        <begin position="64"/>
        <end position="72"/>
    </location>
</feature>
<feature type="short sequence motif" description="SH3-binding 2" evidence="3">
    <location>
        <begin position="101"/>
        <end position="109"/>
    </location>
</feature>
<feature type="short sequence motif" description="Nuclear localization signal" evidence="1">
    <location>
        <begin position="274"/>
        <end position="283"/>
    </location>
</feature>
<feature type="compositionally biased region" description="Pro residues" evidence="4">
    <location>
        <begin position="26"/>
        <end position="37"/>
    </location>
</feature>
<feature type="compositionally biased region" description="Pro residues" evidence="4">
    <location>
        <begin position="59"/>
        <end position="72"/>
    </location>
</feature>
<feature type="modified residue" description="Phosphotyrosine; by ABL" evidence="1">
    <location>
        <position position="91"/>
    </location>
</feature>
<feature type="modified residue" description="Phosphothreonine; by PKC/PRKCD" evidence="1">
    <location>
        <position position="178"/>
    </location>
</feature>
<feature type="lipid moiety-binding region" description="S-palmitoyl cysteine" evidence="1">
    <location>
        <position position="201"/>
    </location>
</feature>
<feature type="lipid moiety-binding region" description="S-palmitoyl cysteine" evidence="1">
    <location>
        <position position="202"/>
    </location>
</feature>
<feature type="lipid moiety-binding region" description="S-palmitoyl cysteine" evidence="1">
    <location>
        <position position="205"/>
    </location>
</feature>
<feature type="lipid moiety-binding region" description="S-palmitoyl cysteine" evidence="1">
    <location>
        <position position="206"/>
    </location>
</feature>
<proteinExistence type="evidence at protein level"/>
<accession>P58195</accession>
<keyword id="KW-0106">Calcium</keyword>
<keyword id="KW-1003">Cell membrane</keyword>
<keyword id="KW-0963">Cytoplasm</keyword>
<keyword id="KW-0238">DNA-binding</keyword>
<keyword id="KW-0378">Hydrolase</keyword>
<keyword id="KW-0445">Lipid transport</keyword>
<keyword id="KW-0449">Lipoprotein</keyword>
<keyword id="KW-0472">Membrane</keyword>
<keyword id="KW-0540">Nuclease</keyword>
<keyword id="KW-0539">Nucleus</keyword>
<keyword id="KW-0564">Palmitate</keyword>
<keyword id="KW-0597">Phosphoprotein</keyword>
<keyword id="KW-1185">Reference proteome</keyword>
<keyword id="KW-0677">Repeat</keyword>
<keyword id="KW-0729">SH3-binding</keyword>
<keyword id="KW-0812">Transmembrane</keyword>
<keyword id="KW-1133">Transmembrane helix</keyword>
<keyword id="KW-0813">Transport</keyword>